<dbReference type="EMBL" id="AAFI02000177">
    <property type="protein sequence ID" value="EAL61624.1"/>
    <property type="molecule type" value="Genomic_DNA"/>
</dbReference>
<dbReference type="RefSeq" id="XP_635113.1">
    <property type="nucleotide sequence ID" value="XM_630021.1"/>
</dbReference>
<dbReference type="SMR" id="Q54EX7"/>
<dbReference type="FunCoup" id="Q54EX7">
    <property type="interactions" value="3"/>
</dbReference>
<dbReference type="STRING" id="44689.Q54EX7"/>
<dbReference type="PaxDb" id="44689-DDB0183791"/>
<dbReference type="EnsemblProtists" id="EAL61624">
    <property type="protein sequence ID" value="EAL61624"/>
    <property type="gene ID" value="DDB_G0291281"/>
</dbReference>
<dbReference type="GeneID" id="8628060"/>
<dbReference type="KEGG" id="ddi:DDB_G0291281"/>
<dbReference type="dictyBase" id="DDB_G0291281"/>
<dbReference type="VEuPathDB" id="AmoebaDB:DDB_G0291281"/>
<dbReference type="eggNOG" id="ENOG502RHWK">
    <property type="taxonomic scope" value="Eukaryota"/>
</dbReference>
<dbReference type="HOGENOM" id="CLU_2037071_0_0_1"/>
<dbReference type="InParanoid" id="Q54EX7"/>
<dbReference type="OMA" id="PTFPMVF"/>
<dbReference type="PhylomeDB" id="Q54EX7"/>
<dbReference type="PRO" id="PR:Q54EX7"/>
<dbReference type="Proteomes" id="UP000002195">
    <property type="component" value="Chromosome 6"/>
</dbReference>
<dbReference type="GO" id="GO:0005759">
    <property type="term" value="C:mitochondrial matrix"/>
    <property type="evidence" value="ECO:0000318"/>
    <property type="project" value="GO_Central"/>
</dbReference>
<dbReference type="Gene3D" id="3.40.30.10">
    <property type="entry name" value="Glutaredoxin"/>
    <property type="match status" value="1"/>
</dbReference>
<dbReference type="InterPro" id="IPR036249">
    <property type="entry name" value="Thioredoxin-like_sf"/>
</dbReference>
<dbReference type="PANTHER" id="PTHR45694">
    <property type="entry name" value="GLUTAREDOXIN 2"/>
    <property type="match status" value="1"/>
</dbReference>
<dbReference type="PANTHER" id="PTHR45694:SF18">
    <property type="entry name" value="GLUTAREDOXIN-1-RELATED"/>
    <property type="match status" value="1"/>
</dbReference>
<dbReference type="SUPFAM" id="SSF52833">
    <property type="entry name" value="Thioredoxin-like"/>
    <property type="match status" value="1"/>
</dbReference>
<dbReference type="PROSITE" id="PS51354">
    <property type="entry name" value="GLUTAREDOXIN_2"/>
    <property type="match status" value="1"/>
</dbReference>
<name>GLRXL_DICDI</name>
<organism>
    <name type="scientific">Dictyostelium discoideum</name>
    <name type="common">Social amoeba</name>
    <dbReference type="NCBI Taxonomy" id="44689"/>
    <lineage>
        <taxon>Eukaryota</taxon>
        <taxon>Amoebozoa</taxon>
        <taxon>Evosea</taxon>
        <taxon>Eumycetozoa</taxon>
        <taxon>Dictyostelia</taxon>
        <taxon>Dictyosteliales</taxon>
        <taxon>Dictyosteliaceae</taxon>
        <taxon>Dictyostelium</taxon>
    </lineage>
</organism>
<protein>
    <recommendedName>
        <fullName>Glutaredoxin-like protein</fullName>
    </recommendedName>
</protein>
<reference key="1">
    <citation type="journal article" date="2005" name="Nature">
        <title>The genome of the social amoeba Dictyostelium discoideum.</title>
        <authorList>
            <person name="Eichinger L."/>
            <person name="Pachebat J.A."/>
            <person name="Gloeckner G."/>
            <person name="Rajandream M.A."/>
            <person name="Sucgang R."/>
            <person name="Berriman M."/>
            <person name="Song J."/>
            <person name="Olsen R."/>
            <person name="Szafranski K."/>
            <person name="Xu Q."/>
            <person name="Tunggal B."/>
            <person name="Kummerfeld S."/>
            <person name="Madera M."/>
            <person name="Konfortov B.A."/>
            <person name="Rivero F."/>
            <person name="Bankier A.T."/>
            <person name="Lehmann R."/>
            <person name="Hamlin N."/>
            <person name="Davies R."/>
            <person name="Gaudet P."/>
            <person name="Fey P."/>
            <person name="Pilcher K."/>
            <person name="Chen G."/>
            <person name="Saunders D."/>
            <person name="Sodergren E.J."/>
            <person name="Davis P."/>
            <person name="Kerhornou A."/>
            <person name="Nie X."/>
            <person name="Hall N."/>
            <person name="Anjard C."/>
            <person name="Hemphill L."/>
            <person name="Bason N."/>
            <person name="Farbrother P."/>
            <person name="Desany B."/>
            <person name="Just E."/>
            <person name="Morio T."/>
            <person name="Rost R."/>
            <person name="Churcher C.M."/>
            <person name="Cooper J."/>
            <person name="Haydock S."/>
            <person name="van Driessche N."/>
            <person name="Cronin A."/>
            <person name="Goodhead I."/>
            <person name="Muzny D.M."/>
            <person name="Mourier T."/>
            <person name="Pain A."/>
            <person name="Lu M."/>
            <person name="Harper D."/>
            <person name="Lindsay R."/>
            <person name="Hauser H."/>
            <person name="James K.D."/>
            <person name="Quiles M."/>
            <person name="Madan Babu M."/>
            <person name="Saito T."/>
            <person name="Buchrieser C."/>
            <person name="Wardroper A."/>
            <person name="Felder M."/>
            <person name="Thangavelu M."/>
            <person name="Johnson D."/>
            <person name="Knights A."/>
            <person name="Loulseged H."/>
            <person name="Mungall K.L."/>
            <person name="Oliver K."/>
            <person name="Price C."/>
            <person name="Quail M.A."/>
            <person name="Urushihara H."/>
            <person name="Hernandez J."/>
            <person name="Rabbinowitsch E."/>
            <person name="Steffen D."/>
            <person name="Sanders M."/>
            <person name="Ma J."/>
            <person name="Kohara Y."/>
            <person name="Sharp S."/>
            <person name="Simmonds M.N."/>
            <person name="Spiegler S."/>
            <person name="Tivey A."/>
            <person name="Sugano S."/>
            <person name="White B."/>
            <person name="Walker D."/>
            <person name="Woodward J.R."/>
            <person name="Winckler T."/>
            <person name="Tanaka Y."/>
            <person name="Shaulsky G."/>
            <person name="Schleicher M."/>
            <person name="Weinstock G.M."/>
            <person name="Rosenthal A."/>
            <person name="Cox E.C."/>
            <person name="Chisholm R.L."/>
            <person name="Gibbs R.A."/>
            <person name="Loomis W.F."/>
            <person name="Platzer M."/>
            <person name="Kay R.R."/>
            <person name="Williams J.G."/>
            <person name="Dear P.H."/>
            <person name="Noegel A.A."/>
            <person name="Barrell B.G."/>
            <person name="Kuspa A."/>
        </authorList>
    </citation>
    <scope>NUCLEOTIDE SEQUENCE [LARGE SCALE GENOMIC DNA]</scope>
    <source>
        <strain>AX4</strain>
    </source>
</reference>
<feature type="chain" id="PRO_0000342154" description="Glutaredoxin-like protein">
    <location>
        <begin position="1"/>
        <end position="123"/>
    </location>
</feature>
<feature type="domain" description="Glutaredoxin" evidence="1">
    <location>
        <begin position="27"/>
        <end position="123"/>
    </location>
</feature>
<proteinExistence type="inferred from homology"/>
<comment type="similarity">
    <text evidence="2">Belongs to the glutaredoxin family.</text>
</comment>
<comment type="caution">
    <text evidence="2">May be inactive since it lacks many features found in other glutaredoxins such as the cysteines forming the redox-active disulfide bond.</text>
</comment>
<accession>Q54EX7</accession>
<evidence type="ECO:0000255" key="1">
    <source>
        <dbReference type="PROSITE-ProRule" id="PRU00686"/>
    </source>
</evidence>
<evidence type="ECO:0000305" key="2"/>
<gene>
    <name type="primary">grxB</name>
    <name type="ORF">DDB_G0291281</name>
</gene>
<keyword id="KW-0249">Electron transport</keyword>
<keyword id="KW-0676">Redox-active center</keyword>
<keyword id="KW-1185">Reference proteome</keyword>
<keyword id="KW-0813">Transport</keyword>
<sequence>MSTNRRILTKKTENISNFINNYHSDVINEVEESITNNRVVVVGMAYNPHVSKVNKVLGEQGVQFKYLEYGSYFSMWSQRLSIKMFTGFPTYPQVFVDGTLIGGCDDTIKELNEGTLFNDLKKK</sequence>